<organism>
    <name type="scientific">Sceloporus woodi</name>
    <name type="common">Florida scrub lizard</name>
    <dbReference type="NCBI Taxonomy" id="59726"/>
    <lineage>
        <taxon>Eukaryota</taxon>
        <taxon>Metazoa</taxon>
        <taxon>Chordata</taxon>
        <taxon>Craniata</taxon>
        <taxon>Vertebrata</taxon>
        <taxon>Euteleostomi</taxon>
        <taxon>Lepidosauria</taxon>
        <taxon>Squamata</taxon>
        <taxon>Bifurcata</taxon>
        <taxon>Unidentata</taxon>
        <taxon>Episquamata</taxon>
        <taxon>Toxicofera</taxon>
        <taxon>Iguania</taxon>
        <taxon>Phrynosomatidae</taxon>
        <taxon>Phrynosomatinae</taxon>
        <taxon>Sceloporus</taxon>
    </lineage>
</organism>
<protein>
    <recommendedName>
        <fullName>L-lactate dehydrogenase A chain</fullName>
        <shortName>LDH-A</shortName>
        <ecNumber evidence="2">1.1.1.27</ecNumber>
    </recommendedName>
</protein>
<evidence type="ECO:0000250" key="1"/>
<evidence type="ECO:0000250" key="2">
    <source>
        <dbReference type="UniProtKB" id="P00338"/>
    </source>
</evidence>
<evidence type="ECO:0000305" key="3"/>
<evidence type="ECO:0000305" key="4">
    <source>
    </source>
</evidence>
<proteinExistence type="evidence at transcript level"/>
<comment type="function">
    <text evidence="2">Interconverts simultaneously and stereospecifically pyruvate and lactate with concomitant interconversion of NADH and NAD(+).</text>
</comment>
<comment type="catalytic activity">
    <reaction evidence="2">
        <text>(S)-lactate + NAD(+) = pyruvate + NADH + H(+)</text>
        <dbReference type="Rhea" id="RHEA:23444"/>
        <dbReference type="ChEBI" id="CHEBI:15361"/>
        <dbReference type="ChEBI" id="CHEBI:15378"/>
        <dbReference type="ChEBI" id="CHEBI:16651"/>
        <dbReference type="ChEBI" id="CHEBI:57540"/>
        <dbReference type="ChEBI" id="CHEBI:57945"/>
        <dbReference type="EC" id="1.1.1.27"/>
    </reaction>
    <physiologicalReaction direction="left-to-right" evidence="2">
        <dbReference type="Rhea" id="RHEA:23445"/>
    </physiologicalReaction>
    <physiologicalReaction direction="right-to-left" evidence="2">
        <dbReference type="Rhea" id="RHEA:23446"/>
    </physiologicalReaction>
</comment>
<comment type="pathway">
    <text evidence="2">Fermentation; pyruvate fermentation to lactate; (S)-lactate from pyruvate: step 1/1.</text>
</comment>
<comment type="subunit">
    <text evidence="1">Homotetramer.</text>
</comment>
<comment type="subcellular location">
    <subcellularLocation>
        <location evidence="1">Cytoplasm</location>
    </subcellularLocation>
</comment>
<comment type="similarity">
    <text evidence="3">Belongs to the LDH/MDH superfamily. LDH family.</text>
</comment>
<comment type="caution">
    <text evidence="4">Was originally thought to originate from S.undulatus.</text>
</comment>
<name>LDHA_SCEWO</name>
<feature type="initiator methionine" description="Removed" evidence="1">
    <location>
        <position position="1"/>
    </location>
</feature>
<feature type="chain" id="PRO_0000168427" description="L-lactate dehydrogenase A chain">
    <location>
        <begin position="2"/>
        <end position="332"/>
    </location>
</feature>
<feature type="active site" description="Proton acceptor" evidence="1">
    <location>
        <position position="193"/>
    </location>
</feature>
<feature type="binding site" evidence="1">
    <location>
        <begin position="29"/>
        <end position="57"/>
    </location>
    <ligand>
        <name>NAD(+)</name>
        <dbReference type="ChEBI" id="CHEBI:57540"/>
    </ligand>
</feature>
<feature type="binding site" evidence="1">
    <location>
        <position position="99"/>
    </location>
    <ligand>
        <name>NAD(+)</name>
        <dbReference type="ChEBI" id="CHEBI:57540"/>
    </ligand>
</feature>
<feature type="binding site" evidence="1">
    <location>
        <position position="106"/>
    </location>
    <ligand>
        <name>substrate</name>
    </ligand>
</feature>
<feature type="binding site" evidence="1">
    <location>
        <position position="138"/>
    </location>
    <ligand>
        <name>NAD(+)</name>
        <dbReference type="ChEBI" id="CHEBI:57540"/>
    </ligand>
</feature>
<feature type="binding site" evidence="1">
    <location>
        <position position="138"/>
    </location>
    <ligand>
        <name>substrate</name>
    </ligand>
</feature>
<feature type="binding site" evidence="1">
    <location>
        <position position="169"/>
    </location>
    <ligand>
        <name>substrate</name>
    </ligand>
</feature>
<feature type="binding site" evidence="1">
    <location>
        <position position="248"/>
    </location>
    <ligand>
        <name>substrate</name>
    </ligand>
</feature>
<dbReference type="EC" id="1.1.1.27" evidence="2"/>
<dbReference type="EMBL" id="U28410">
    <property type="protein sequence ID" value="AAB53025.1"/>
    <property type="molecule type" value="mRNA"/>
</dbReference>
<dbReference type="SMR" id="P79912"/>
<dbReference type="UniPathway" id="UPA00554">
    <property type="reaction ID" value="UER00611"/>
</dbReference>
<dbReference type="GO" id="GO:0005737">
    <property type="term" value="C:cytoplasm"/>
    <property type="evidence" value="ECO:0007669"/>
    <property type="project" value="UniProtKB-SubCell"/>
</dbReference>
<dbReference type="GO" id="GO:0004459">
    <property type="term" value="F:L-lactate dehydrogenase activity"/>
    <property type="evidence" value="ECO:0007669"/>
    <property type="project" value="UniProtKB-EC"/>
</dbReference>
<dbReference type="GO" id="GO:0006089">
    <property type="term" value="P:lactate metabolic process"/>
    <property type="evidence" value="ECO:0007669"/>
    <property type="project" value="TreeGrafter"/>
</dbReference>
<dbReference type="CDD" id="cd05293">
    <property type="entry name" value="LDH_1"/>
    <property type="match status" value="1"/>
</dbReference>
<dbReference type="FunFam" id="3.40.50.720:FF:000029">
    <property type="entry name" value="L-lactate dehydrogenase A chain"/>
    <property type="match status" value="1"/>
</dbReference>
<dbReference type="FunFam" id="3.90.110.10:FF:000003">
    <property type="entry name" value="L-lactate dehydrogenase A chain"/>
    <property type="match status" value="1"/>
</dbReference>
<dbReference type="Gene3D" id="3.90.110.10">
    <property type="entry name" value="Lactate dehydrogenase/glycoside hydrolase, family 4, C-terminal"/>
    <property type="match status" value="1"/>
</dbReference>
<dbReference type="Gene3D" id="3.40.50.720">
    <property type="entry name" value="NAD(P)-binding Rossmann-like Domain"/>
    <property type="match status" value="1"/>
</dbReference>
<dbReference type="HAMAP" id="MF_00488">
    <property type="entry name" value="Lactate_dehydrog"/>
    <property type="match status" value="1"/>
</dbReference>
<dbReference type="InterPro" id="IPR001557">
    <property type="entry name" value="L-lactate/malate_DH"/>
</dbReference>
<dbReference type="InterPro" id="IPR011304">
    <property type="entry name" value="L-lactate_DH"/>
</dbReference>
<dbReference type="InterPro" id="IPR018177">
    <property type="entry name" value="L-lactate_DH_AS"/>
</dbReference>
<dbReference type="InterPro" id="IPR022383">
    <property type="entry name" value="Lactate/malate_DH_C"/>
</dbReference>
<dbReference type="InterPro" id="IPR001236">
    <property type="entry name" value="Lactate/malate_DH_N"/>
</dbReference>
<dbReference type="InterPro" id="IPR015955">
    <property type="entry name" value="Lactate_DH/Glyco_Ohase_4_C"/>
</dbReference>
<dbReference type="InterPro" id="IPR036291">
    <property type="entry name" value="NAD(P)-bd_dom_sf"/>
</dbReference>
<dbReference type="NCBIfam" id="TIGR01771">
    <property type="entry name" value="L-LDH-NAD"/>
    <property type="match status" value="1"/>
</dbReference>
<dbReference type="PANTHER" id="PTHR43128">
    <property type="entry name" value="L-2-HYDROXYCARBOXYLATE DEHYDROGENASE (NAD(P)(+))"/>
    <property type="match status" value="1"/>
</dbReference>
<dbReference type="PANTHER" id="PTHR43128:SF10">
    <property type="entry name" value="L-LACTATE DEHYDROGENASE A CHAIN"/>
    <property type="match status" value="1"/>
</dbReference>
<dbReference type="Pfam" id="PF02866">
    <property type="entry name" value="Ldh_1_C"/>
    <property type="match status" value="1"/>
</dbReference>
<dbReference type="Pfam" id="PF00056">
    <property type="entry name" value="Ldh_1_N"/>
    <property type="match status" value="1"/>
</dbReference>
<dbReference type="PIRSF" id="PIRSF000102">
    <property type="entry name" value="Lac_mal_DH"/>
    <property type="match status" value="1"/>
</dbReference>
<dbReference type="PRINTS" id="PR00086">
    <property type="entry name" value="LLDHDRGNASE"/>
</dbReference>
<dbReference type="SUPFAM" id="SSF56327">
    <property type="entry name" value="LDH C-terminal domain-like"/>
    <property type="match status" value="1"/>
</dbReference>
<dbReference type="SUPFAM" id="SSF51735">
    <property type="entry name" value="NAD(P)-binding Rossmann-fold domains"/>
    <property type="match status" value="1"/>
</dbReference>
<dbReference type="PROSITE" id="PS00064">
    <property type="entry name" value="L_LDH"/>
    <property type="match status" value="1"/>
</dbReference>
<accession>P79912</accession>
<reference key="1">
    <citation type="journal article" date="1996" name="Gene">
        <title>Sequences of the lizard cDNAs encoding lactate dehydrogenase (LDH) isozymes A (muscle) and B (heart).</title>
        <authorList>
            <person name="Mannen H."/>
            <person name="Tsoi S.C.-M."/>
            <person name="Pickford D.B."/>
            <person name="Donald J.A."/>
            <person name="Guillette L.J."/>
            <person name="Li S.S.-L."/>
        </authorList>
    </citation>
    <scope>NUCLEOTIDE SEQUENCE [MRNA]</scope>
</reference>
<sequence length="332" mass="36543">MSLKEKLIVNVHKEEQPHAHNKITVVGVGAVGMACAISILMKDLADELALVDVIEDKLKGEMLDLQHGSLFLRTPKIVSGKDYAVTAHSKLVIITAGARQQEGESRLNLVQRNVNIFKFIIPNVVKYSPDCKLLVVSNPVDILTYVAWKISGFPKHRVIGSGCNLDSARFRHLMAEKLGIHPLSCHGWIVGEHGDSSVPVWSGVNVAGVSLKGLHPDMGTDGDKENWKQVHKQVVDSAYEVIKLKGYTSWAIGLSVADLAETIMKNLRRVHPVSTMVKGMHGINDDVFLSVPCVLGYSGITDVVKMTLKSEEEDKLRKSADTLWGIQKELQF</sequence>
<keyword id="KW-0963">Cytoplasm</keyword>
<keyword id="KW-0520">NAD</keyword>
<keyword id="KW-0560">Oxidoreductase</keyword>
<gene>
    <name type="primary">LDHA</name>
</gene>